<keyword id="KW-0597">Phosphoprotein</keyword>
<keyword id="KW-1185">Reference proteome</keyword>
<accession>Q66H63</accession>
<protein>
    <recommendedName>
        <fullName>Ganglioside-induced differentiation-associated-protein 2</fullName>
    </recommendedName>
</protein>
<sequence>MDPLGAPSQFVDVDTLVSWGDSYEDEVNSSDSTAEAFQEDSNRSPFLYNRDINGKVVLWKGDVALLNCTAIVNTSNESLTDKNPVSESIFMLAGPDLKEDLQKLKGCRTGEAKLTKGFNLAARFIIHTVGPKYKSRYRTAAESSLYSCYRNVLQLAKEQSMSSVGFCVINSAKRGYPLEDATHIALRTVRRFLEIHGETIEKVVFAISELEEATYQKLLPLYFPRSLKEESQSLPSLPADIGNAEGEPVVPERQIRISEKPGASEDHEEDEDEGLGVDLSFIGSHAFARMEGDIDKQRKLILQGQLSEAALQKQHQRNYNRWLCQARSEDLSDIASLKALYQTGVDNCGRTVMVVVGRNIPVTLIDMDKALLYFIHVMDHIAVKEYVLVYFHTLTSEYNHLDSDFLKKLYDVVDIKYKRNLKAVYFVHPTFRSKVSTWFFTTFSVSGLKDKIHHVDSLQQLFSAISPEQIDFPPFVLEYDARENGPYFASYPPSPDL</sequence>
<organism>
    <name type="scientific">Rattus norvegicus</name>
    <name type="common">Rat</name>
    <dbReference type="NCBI Taxonomy" id="10116"/>
    <lineage>
        <taxon>Eukaryota</taxon>
        <taxon>Metazoa</taxon>
        <taxon>Chordata</taxon>
        <taxon>Craniata</taxon>
        <taxon>Vertebrata</taxon>
        <taxon>Euteleostomi</taxon>
        <taxon>Mammalia</taxon>
        <taxon>Eutheria</taxon>
        <taxon>Euarchontoglires</taxon>
        <taxon>Glires</taxon>
        <taxon>Rodentia</taxon>
        <taxon>Myomorpha</taxon>
        <taxon>Muroidea</taxon>
        <taxon>Muridae</taxon>
        <taxon>Murinae</taxon>
        <taxon>Rattus</taxon>
    </lineage>
</organism>
<name>GDAP2_RAT</name>
<evidence type="ECO:0000250" key="1">
    <source>
        <dbReference type="UniProtKB" id="Q9NXN4"/>
    </source>
</evidence>
<evidence type="ECO:0000255" key="2">
    <source>
        <dbReference type="PROSITE-ProRule" id="PRU00490"/>
    </source>
</evidence>
<evidence type="ECO:0000305" key="3"/>
<reference key="1">
    <citation type="journal article" date="2004" name="Genome Res.">
        <title>The status, quality, and expansion of the NIH full-length cDNA project: the Mammalian Gene Collection (MGC).</title>
        <authorList>
            <consortium name="The MGC Project Team"/>
        </authorList>
    </citation>
    <scope>NUCLEOTIDE SEQUENCE [LARGE SCALE MRNA]</scope>
    <source>
        <tissue>Testis</tissue>
    </source>
</reference>
<comment type="similarity">
    <text evidence="3">Belongs to the GDAP2 family.</text>
</comment>
<gene>
    <name type="primary">Gdap2</name>
</gene>
<feature type="chain" id="PRO_0000331397" description="Ganglioside-induced differentiation-associated-protein 2">
    <location>
        <begin position="1"/>
        <end position="497"/>
    </location>
</feature>
<feature type="domain" description="Macro" evidence="2">
    <location>
        <begin position="43"/>
        <end position="223"/>
    </location>
</feature>
<feature type="domain" description="CRAL-TRIO">
    <location>
        <begin position="333"/>
        <end position="481"/>
    </location>
</feature>
<feature type="modified residue" description="Phosphoserine" evidence="1">
    <location>
        <position position="280"/>
    </location>
</feature>
<proteinExistence type="evidence at transcript level"/>
<dbReference type="EMBL" id="BC082000">
    <property type="protein sequence ID" value="AAH82000.1"/>
    <property type="molecule type" value="mRNA"/>
</dbReference>
<dbReference type="RefSeq" id="NP_001013219.1">
    <property type="nucleotide sequence ID" value="NM_001013201.1"/>
</dbReference>
<dbReference type="RefSeq" id="XP_006233094.1">
    <property type="nucleotide sequence ID" value="XM_006233032.5"/>
</dbReference>
<dbReference type="SMR" id="Q66H63"/>
<dbReference type="FunCoup" id="Q66H63">
    <property type="interactions" value="3743"/>
</dbReference>
<dbReference type="STRING" id="10116.ENSRNOP00000026953"/>
<dbReference type="PhosphoSitePlus" id="Q66H63"/>
<dbReference type="PaxDb" id="10116-ENSRNOP00000026953"/>
<dbReference type="PeptideAtlas" id="Q66H63"/>
<dbReference type="GeneID" id="362004"/>
<dbReference type="KEGG" id="rno:362004"/>
<dbReference type="UCSC" id="RGD:1306050">
    <property type="organism name" value="rat"/>
</dbReference>
<dbReference type="AGR" id="RGD:1306050"/>
<dbReference type="CTD" id="54834"/>
<dbReference type="RGD" id="1306050">
    <property type="gene designation" value="Gdap2"/>
</dbReference>
<dbReference type="VEuPathDB" id="HostDB:ENSRNOG00000019754"/>
<dbReference type="eggNOG" id="KOG2633">
    <property type="taxonomic scope" value="Eukaryota"/>
</dbReference>
<dbReference type="HOGENOM" id="CLU_026877_0_0_1"/>
<dbReference type="InParanoid" id="Q66H63"/>
<dbReference type="PRO" id="PR:Q66H63"/>
<dbReference type="Proteomes" id="UP000002494">
    <property type="component" value="Chromosome 2"/>
</dbReference>
<dbReference type="Bgee" id="ENSRNOG00000019754">
    <property type="expression patterns" value="Expressed in brain and 20 other cell types or tissues"/>
</dbReference>
<dbReference type="GO" id="GO:0032526">
    <property type="term" value="P:response to retinoic acid"/>
    <property type="evidence" value="ECO:0000266"/>
    <property type="project" value="RGD"/>
</dbReference>
<dbReference type="CDD" id="cd02905">
    <property type="entry name" value="Macro_GDAP2-like"/>
    <property type="match status" value="1"/>
</dbReference>
<dbReference type="CDD" id="cd00170">
    <property type="entry name" value="SEC14"/>
    <property type="match status" value="1"/>
</dbReference>
<dbReference type="FunFam" id="3.40.525.10:FF:000014">
    <property type="entry name" value="Ganglioside-induced differentiation-associated protein 2"/>
    <property type="match status" value="1"/>
</dbReference>
<dbReference type="FunFam" id="3.40.220.10:FF:000006">
    <property type="entry name" value="ganglioside-induced differentiation-associated protein 2 isoform X1"/>
    <property type="match status" value="1"/>
</dbReference>
<dbReference type="Gene3D" id="3.40.525.10">
    <property type="entry name" value="CRAL-TRIO lipid binding domain"/>
    <property type="match status" value="1"/>
</dbReference>
<dbReference type="Gene3D" id="3.40.220.10">
    <property type="entry name" value="Leucine Aminopeptidase, subunit E, domain 1"/>
    <property type="match status" value="1"/>
</dbReference>
<dbReference type="InterPro" id="IPR001251">
    <property type="entry name" value="CRAL-TRIO_dom"/>
</dbReference>
<dbReference type="InterPro" id="IPR036865">
    <property type="entry name" value="CRAL-TRIO_dom_sf"/>
</dbReference>
<dbReference type="InterPro" id="IPR002589">
    <property type="entry name" value="Macro_dom"/>
</dbReference>
<dbReference type="InterPro" id="IPR043472">
    <property type="entry name" value="Macro_dom-like"/>
</dbReference>
<dbReference type="InterPro" id="IPR035793">
    <property type="entry name" value="Macro_GDAP2"/>
</dbReference>
<dbReference type="PANTHER" id="PTHR11106">
    <property type="entry name" value="GANGLIOSIDE INDUCED DIFFERENTIATION ASSOCIATED PROTEIN 2-RELATED"/>
    <property type="match status" value="1"/>
</dbReference>
<dbReference type="PANTHER" id="PTHR11106:SF72">
    <property type="entry name" value="GANGLIOSIDE-INDUCED DIFFERENTIATION-ASSOCIATED PROTEIN 2"/>
    <property type="match status" value="1"/>
</dbReference>
<dbReference type="Pfam" id="PF13716">
    <property type="entry name" value="CRAL_TRIO_2"/>
    <property type="match status" value="1"/>
</dbReference>
<dbReference type="Pfam" id="PF01661">
    <property type="entry name" value="Macro"/>
    <property type="match status" value="1"/>
</dbReference>
<dbReference type="SMART" id="SM00506">
    <property type="entry name" value="A1pp"/>
    <property type="match status" value="1"/>
</dbReference>
<dbReference type="SMART" id="SM00516">
    <property type="entry name" value="SEC14"/>
    <property type="match status" value="1"/>
</dbReference>
<dbReference type="SUPFAM" id="SSF52087">
    <property type="entry name" value="CRAL/TRIO domain"/>
    <property type="match status" value="1"/>
</dbReference>
<dbReference type="SUPFAM" id="SSF52949">
    <property type="entry name" value="Macro domain-like"/>
    <property type="match status" value="1"/>
</dbReference>
<dbReference type="PROSITE" id="PS51154">
    <property type="entry name" value="MACRO"/>
    <property type="match status" value="1"/>
</dbReference>